<proteinExistence type="evidence at protein level"/>
<organism>
    <name type="scientific">Latimeria chalumnae</name>
    <name type="common">Coelacanth</name>
    <dbReference type="NCBI Taxonomy" id="7897"/>
    <lineage>
        <taxon>Eukaryota</taxon>
        <taxon>Metazoa</taxon>
        <taxon>Chordata</taxon>
        <taxon>Craniata</taxon>
        <taxon>Vertebrata</taxon>
        <taxon>Euteleostomi</taxon>
        <taxon>Coelacanthiformes</taxon>
        <taxon>Coelacanthidae</taxon>
        <taxon>Latimeria</taxon>
    </lineage>
</organism>
<feature type="chain" id="PRO_0000052985" description="Hemoglobin subunit beta">
    <location>
        <begin position="1"/>
        <end position="146"/>
    </location>
</feature>
<feature type="domain" description="Globin" evidence="1">
    <location>
        <begin position="2"/>
        <end position="146"/>
    </location>
</feature>
<feature type="binding site" description="distal binding residue" evidence="1">
    <location>
        <position position="63"/>
    </location>
    <ligand>
        <name>heme b</name>
        <dbReference type="ChEBI" id="CHEBI:60344"/>
    </ligand>
    <ligandPart>
        <name>Fe</name>
        <dbReference type="ChEBI" id="CHEBI:18248"/>
    </ligandPart>
</feature>
<feature type="binding site" description="proximal binding residue" evidence="1">
    <location>
        <position position="92"/>
    </location>
    <ligand>
        <name>heme b</name>
        <dbReference type="ChEBI" id="CHEBI:60344"/>
    </ligand>
    <ligandPart>
        <name>Fe</name>
        <dbReference type="ChEBI" id="CHEBI:18248"/>
    </ligandPart>
</feature>
<evidence type="ECO:0000255" key="1">
    <source>
        <dbReference type="PROSITE-ProRule" id="PRU00238"/>
    </source>
</evidence>
<name>HBB_LATCH</name>
<dbReference type="PIR" id="S15449">
    <property type="entry name" value="S15449"/>
</dbReference>
<dbReference type="SMR" id="P23741"/>
<dbReference type="FunCoup" id="P23741">
    <property type="interactions" value="31"/>
</dbReference>
<dbReference type="STRING" id="7897.ENSLACP00000005370"/>
<dbReference type="eggNOG" id="KOG3378">
    <property type="taxonomic scope" value="Eukaryota"/>
</dbReference>
<dbReference type="InParanoid" id="P23741"/>
<dbReference type="Proteomes" id="UP000008672">
    <property type="component" value="Unassembled WGS sequence"/>
</dbReference>
<dbReference type="GO" id="GO:0072562">
    <property type="term" value="C:blood microparticle"/>
    <property type="evidence" value="ECO:0007669"/>
    <property type="project" value="TreeGrafter"/>
</dbReference>
<dbReference type="GO" id="GO:0031838">
    <property type="term" value="C:haptoglobin-hemoglobin complex"/>
    <property type="evidence" value="ECO:0007669"/>
    <property type="project" value="TreeGrafter"/>
</dbReference>
<dbReference type="GO" id="GO:0005833">
    <property type="term" value="C:hemoglobin complex"/>
    <property type="evidence" value="ECO:0007669"/>
    <property type="project" value="InterPro"/>
</dbReference>
<dbReference type="GO" id="GO:0031720">
    <property type="term" value="F:haptoglobin binding"/>
    <property type="evidence" value="ECO:0007669"/>
    <property type="project" value="TreeGrafter"/>
</dbReference>
<dbReference type="GO" id="GO:0020037">
    <property type="term" value="F:heme binding"/>
    <property type="evidence" value="ECO:0007669"/>
    <property type="project" value="InterPro"/>
</dbReference>
<dbReference type="GO" id="GO:0046872">
    <property type="term" value="F:metal ion binding"/>
    <property type="evidence" value="ECO:0007669"/>
    <property type="project" value="UniProtKB-KW"/>
</dbReference>
<dbReference type="GO" id="GO:0043177">
    <property type="term" value="F:organic acid binding"/>
    <property type="evidence" value="ECO:0007669"/>
    <property type="project" value="TreeGrafter"/>
</dbReference>
<dbReference type="GO" id="GO:0019825">
    <property type="term" value="F:oxygen binding"/>
    <property type="evidence" value="ECO:0007669"/>
    <property type="project" value="InterPro"/>
</dbReference>
<dbReference type="GO" id="GO:0005344">
    <property type="term" value="F:oxygen carrier activity"/>
    <property type="evidence" value="ECO:0007669"/>
    <property type="project" value="UniProtKB-KW"/>
</dbReference>
<dbReference type="GO" id="GO:0004601">
    <property type="term" value="F:peroxidase activity"/>
    <property type="evidence" value="ECO:0007669"/>
    <property type="project" value="TreeGrafter"/>
</dbReference>
<dbReference type="GO" id="GO:0042744">
    <property type="term" value="P:hydrogen peroxide catabolic process"/>
    <property type="evidence" value="ECO:0007669"/>
    <property type="project" value="TreeGrafter"/>
</dbReference>
<dbReference type="CDD" id="cd08925">
    <property type="entry name" value="Hb-beta-like"/>
    <property type="match status" value="1"/>
</dbReference>
<dbReference type="FunFam" id="1.10.490.10:FF:000001">
    <property type="entry name" value="Hemoglobin subunit beta"/>
    <property type="match status" value="1"/>
</dbReference>
<dbReference type="Gene3D" id="1.10.490.10">
    <property type="entry name" value="Globins"/>
    <property type="match status" value="1"/>
</dbReference>
<dbReference type="InterPro" id="IPR000971">
    <property type="entry name" value="Globin"/>
</dbReference>
<dbReference type="InterPro" id="IPR009050">
    <property type="entry name" value="Globin-like_sf"/>
</dbReference>
<dbReference type="InterPro" id="IPR012292">
    <property type="entry name" value="Globin/Proto"/>
</dbReference>
<dbReference type="InterPro" id="IPR002337">
    <property type="entry name" value="Hemoglobin_b"/>
</dbReference>
<dbReference type="InterPro" id="IPR050056">
    <property type="entry name" value="Hemoglobin_oxygen_transport"/>
</dbReference>
<dbReference type="PANTHER" id="PTHR11442">
    <property type="entry name" value="HEMOGLOBIN FAMILY MEMBER"/>
    <property type="match status" value="1"/>
</dbReference>
<dbReference type="PANTHER" id="PTHR11442:SF7">
    <property type="entry name" value="HEMOGLOBIN SUBUNIT EPSILON"/>
    <property type="match status" value="1"/>
</dbReference>
<dbReference type="Pfam" id="PF00042">
    <property type="entry name" value="Globin"/>
    <property type="match status" value="1"/>
</dbReference>
<dbReference type="PRINTS" id="PR00814">
    <property type="entry name" value="BETAHAEM"/>
</dbReference>
<dbReference type="SUPFAM" id="SSF46458">
    <property type="entry name" value="Globin-like"/>
    <property type="match status" value="1"/>
</dbReference>
<dbReference type="PROSITE" id="PS01033">
    <property type="entry name" value="GLOBIN"/>
    <property type="match status" value="1"/>
</dbReference>
<sequence>VHWTETERATIETVYQKLHLDEVGREALTRLFIVYPWTTRYFKSFGDLSSSKAIASNPKVTEHGLKVMNKLTEAIHNLDHIKDLFHKLSEKHFHELHVDPQNFKLLSKCLIIVLATKLGKQLTPDVQATWEKLLSVVVAALSREYH</sequence>
<comment type="function">
    <text>Involved in oxygen transport from the lung to the various peripheral tissues.</text>
</comment>
<comment type="subunit">
    <text>Heterotetramer of two alpha chains and two beta chains (an easy dimerization is also reported).</text>
</comment>
<comment type="tissue specificity">
    <text>Red blood cells.</text>
</comment>
<comment type="similarity">
    <text evidence="1">Belongs to the globin family.</text>
</comment>
<protein>
    <recommendedName>
        <fullName>Hemoglobin subunit beta</fullName>
    </recommendedName>
    <alternativeName>
        <fullName>Beta-globin</fullName>
    </alternativeName>
    <alternativeName>
        <fullName>Hemoglobin beta chain</fullName>
    </alternativeName>
</protein>
<reference key="1">
    <citation type="journal article" date="1991" name="Biol. Chem. Hoppe-Seyler">
        <title>A 'living fossil' sequence: primary structure of the coelacanth (Latimeria chalumnae) hemoglobin -- evolutionary and functional aspects.</title>
        <authorList>
            <person name="Gorr T."/>
            <person name="Kleinschmidt T."/>
            <person name="Sgouros J.G."/>
            <person name="Kasang L."/>
        </authorList>
    </citation>
    <scope>PROTEIN SEQUENCE</scope>
</reference>
<reference key="2">
    <citation type="journal article" date="1991" name="Nature">
        <title>Close tetrapod relationships of the coelacanth Latimeria indicated by haemoglobin sequences.</title>
        <authorList>
            <person name="Gorr T."/>
            <person name="Kleinschmidt T."/>
            <person name="Fricke H."/>
        </authorList>
    </citation>
    <scope>PHYLOGENETIC COMPARISONS</scope>
</reference>
<gene>
    <name type="primary">HBB</name>
</gene>
<accession>P23741</accession>
<keyword id="KW-0903">Direct protein sequencing</keyword>
<keyword id="KW-0349">Heme</keyword>
<keyword id="KW-0408">Iron</keyword>
<keyword id="KW-0479">Metal-binding</keyword>
<keyword id="KW-0561">Oxygen transport</keyword>
<keyword id="KW-1185">Reference proteome</keyword>
<keyword id="KW-0813">Transport</keyword>